<reference key="1">
    <citation type="journal article" date="2009" name="Genome Biol.">
        <title>Genomic and genetic analyses of diversity and plant interactions of Pseudomonas fluorescens.</title>
        <authorList>
            <person name="Silby M.W."/>
            <person name="Cerdeno-Tarraga A.M."/>
            <person name="Vernikos G.S."/>
            <person name="Giddens S.R."/>
            <person name="Jackson R.W."/>
            <person name="Preston G.M."/>
            <person name="Zhang X.-X."/>
            <person name="Moon C.D."/>
            <person name="Gehrig S.M."/>
            <person name="Godfrey S.A.C."/>
            <person name="Knight C.G."/>
            <person name="Malone J.G."/>
            <person name="Robinson Z."/>
            <person name="Spiers A.J."/>
            <person name="Harris S."/>
            <person name="Challis G.L."/>
            <person name="Yaxley A.M."/>
            <person name="Harris D."/>
            <person name="Seeger K."/>
            <person name="Murphy L."/>
            <person name="Rutter S."/>
            <person name="Squares R."/>
            <person name="Quail M.A."/>
            <person name="Saunders E."/>
            <person name="Mavromatis K."/>
            <person name="Brettin T.S."/>
            <person name="Bentley S.D."/>
            <person name="Hothersall J."/>
            <person name="Stephens E."/>
            <person name="Thomas C.M."/>
            <person name="Parkhill J."/>
            <person name="Levy S.B."/>
            <person name="Rainey P.B."/>
            <person name="Thomson N.R."/>
        </authorList>
    </citation>
    <scope>NUCLEOTIDE SEQUENCE [LARGE SCALE GENOMIC DNA]</scope>
    <source>
        <strain>Pf0-1</strain>
    </source>
</reference>
<proteinExistence type="inferred from homology"/>
<protein>
    <recommendedName>
        <fullName evidence="1">Aliphatic sulfonates import ATP-binding protein SsuB</fullName>
        <ecNumber evidence="1">7.6.2.14</ecNumber>
    </recommendedName>
</protein>
<evidence type="ECO:0000255" key="1">
    <source>
        <dbReference type="HAMAP-Rule" id="MF_01724"/>
    </source>
</evidence>
<keyword id="KW-0067">ATP-binding</keyword>
<keyword id="KW-0997">Cell inner membrane</keyword>
<keyword id="KW-1003">Cell membrane</keyword>
<keyword id="KW-0472">Membrane</keyword>
<keyword id="KW-0547">Nucleotide-binding</keyword>
<keyword id="KW-1278">Translocase</keyword>
<keyword id="KW-0813">Transport</keyword>
<accession>Q3K506</accession>
<gene>
    <name evidence="1" type="primary">ssuB</name>
    <name type="ordered locus">Pfl01_5411</name>
</gene>
<feature type="chain" id="PRO_0000279934" description="Aliphatic sulfonates import ATP-binding protein SsuB">
    <location>
        <begin position="1"/>
        <end position="268"/>
    </location>
</feature>
<feature type="domain" description="ABC transporter" evidence="1">
    <location>
        <begin position="15"/>
        <end position="236"/>
    </location>
</feature>
<feature type="binding site" evidence="1">
    <location>
        <begin position="47"/>
        <end position="54"/>
    </location>
    <ligand>
        <name>ATP</name>
        <dbReference type="ChEBI" id="CHEBI:30616"/>
    </ligand>
</feature>
<organism>
    <name type="scientific">Pseudomonas fluorescens (strain Pf0-1)</name>
    <dbReference type="NCBI Taxonomy" id="205922"/>
    <lineage>
        <taxon>Bacteria</taxon>
        <taxon>Pseudomonadati</taxon>
        <taxon>Pseudomonadota</taxon>
        <taxon>Gammaproteobacteria</taxon>
        <taxon>Pseudomonadales</taxon>
        <taxon>Pseudomonadaceae</taxon>
        <taxon>Pseudomonas</taxon>
    </lineage>
</organism>
<comment type="function">
    <text evidence="1">Part of the ABC transporter complex SsuABC involved in aliphatic sulfonates import. Responsible for energy coupling to the transport system.</text>
</comment>
<comment type="catalytic activity">
    <reaction evidence="1">
        <text>ATP + H2O + aliphatic sulfonate-[sulfonate-binding protein]Side 1 = ADP + phosphate + aliphatic sulfonateSide 2 + [sulfonate-binding protein]Side 1.</text>
        <dbReference type="EC" id="7.6.2.14"/>
    </reaction>
</comment>
<comment type="subunit">
    <text evidence="1">The complex is composed of two ATP-binding proteins (SsuB), two transmembrane proteins (SsuC) and a solute-binding protein (SsuA).</text>
</comment>
<comment type="subcellular location">
    <subcellularLocation>
        <location evidence="1">Cell inner membrane</location>
        <topology evidence="1">Peripheral membrane protein</topology>
    </subcellularLocation>
</comment>
<comment type="similarity">
    <text evidence="1">Belongs to the ABC transporter superfamily. Aliphatic sulfonates importer (TC 3.A.1.17.2) family.</text>
</comment>
<name>SSUB_PSEPF</name>
<sequence>MTAQQPPRLLRGIPLAVRNLQKTFGSRQVLRGIDLHIPAGQFVAVVGRSGCGKSTLLRLLAGLDQPTGGDLLAGSAPLTDARDDTRLMFQEARLLPWKKIIDNVGLGLKGNWRAQALQALDAVGLADRANEWPAALSGGQKQRVALARALIHQPRLLLLDEPLGALDALTRIEMQQLIERLWQQHGFTVLLVTHDVSEAVAIADRVILIEDGEVGLDLPVELPRPRVRGSHRLAALETEVLNRVLSLPGEPPAPEPVSPLPTQLRWAQ</sequence>
<dbReference type="EC" id="7.6.2.14" evidence="1"/>
<dbReference type="EMBL" id="CP000094">
    <property type="protein sequence ID" value="ABA77148.1"/>
    <property type="molecule type" value="Genomic_DNA"/>
</dbReference>
<dbReference type="RefSeq" id="WP_011336450.1">
    <property type="nucleotide sequence ID" value="NC_007492.2"/>
</dbReference>
<dbReference type="SMR" id="Q3K506"/>
<dbReference type="KEGG" id="pfo:Pfl01_5411"/>
<dbReference type="eggNOG" id="COG1116">
    <property type="taxonomic scope" value="Bacteria"/>
</dbReference>
<dbReference type="HOGENOM" id="CLU_000604_1_22_6"/>
<dbReference type="Proteomes" id="UP000002704">
    <property type="component" value="Chromosome"/>
</dbReference>
<dbReference type="GO" id="GO:0005886">
    <property type="term" value="C:plasma membrane"/>
    <property type="evidence" value="ECO:0007669"/>
    <property type="project" value="UniProtKB-SubCell"/>
</dbReference>
<dbReference type="GO" id="GO:0005524">
    <property type="term" value="F:ATP binding"/>
    <property type="evidence" value="ECO:0007669"/>
    <property type="project" value="UniProtKB-KW"/>
</dbReference>
<dbReference type="GO" id="GO:0016887">
    <property type="term" value="F:ATP hydrolysis activity"/>
    <property type="evidence" value="ECO:0007669"/>
    <property type="project" value="InterPro"/>
</dbReference>
<dbReference type="CDD" id="cd03293">
    <property type="entry name" value="ABC_NrtD_SsuB_transporters"/>
    <property type="match status" value="1"/>
</dbReference>
<dbReference type="FunFam" id="3.40.50.300:FF:000653">
    <property type="entry name" value="Aliphatic sulfonates import ATP-binding protein SsuB"/>
    <property type="match status" value="1"/>
</dbReference>
<dbReference type="Gene3D" id="3.40.50.300">
    <property type="entry name" value="P-loop containing nucleotide triphosphate hydrolases"/>
    <property type="match status" value="1"/>
</dbReference>
<dbReference type="InterPro" id="IPR003593">
    <property type="entry name" value="AAA+_ATPase"/>
</dbReference>
<dbReference type="InterPro" id="IPR003439">
    <property type="entry name" value="ABC_transporter-like_ATP-bd"/>
</dbReference>
<dbReference type="InterPro" id="IPR017871">
    <property type="entry name" value="ABC_transporter-like_CS"/>
</dbReference>
<dbReference type="InterPro" id="IPR050166">
    <property type="entry name" value="ABC_transporter_ATP-bind"/>
</dbReference>
<dbReference type="InterPro" id="IPR027417">
    <property type="entry name" value="P-loop_NTPase"/>
</dbReference>
<dbReference type="NCBIfam" id="NF008420">
    <property type="entry name" value="PRK11247.1"/>
    <property type="match status" value="1"/>
</dbReference>
<dbReference type="PANTHER" id="PTHR42788:SF17">
    <property type="entry name" value="ALIPHATIC SULFONATES IMPORT ATP-BINDING PROTEIN SSUB"/>
    <property type="match status" value="1"/>
</dbReference>
<dbReference type="PANTHER" id="PTHR42788">
    <property type="entry name" value="TAURINE IMPORT ATP-BINDING PROTEIN-RELATED"/>
    <property type="match status" value="1"/>
</dbReference>
<dbReference type="Pfam" id="PF00005">
    <property type="entry name" value="ABC_tran"/>
    <property type="match status" value="1"/>
</dbReference>
<dbReference type="SMART" id="SM00382">
    <property type="entry name" value="AAA"/>
    <property type="match status" value="1"/>
</dbReference>
<dbReference type="SUPFAM" id="SSF52540">
    <property type="entry name" value="P-loop containing nucleoside triphosphate hydrolases"/>
    <property type="match status" value="1"/>
</dbReference>
<dbReference type="PROSITE" id="PS00211">
    <property type="entry name" value="ABC_TRANSPORTER_1"/>
    <property type="match status" value="1"/>
</dbReference>
<dbReference type="PROSITE" id="PS50893">
    <property type="entry name" value="ABC_TRANSPORTER_2"/>
    <property type="match status" value="1"/>
</dbReference>
<dbReference type="PROSITE" id="PS51291">
    <property type="entry name" value="SSUB"/>
    <property type="match status" value="1"/>
</dbReference>